<sequence length="213" mass="23621">MGKLLTMAMPKGRIFEEAAGLLRQAGYRLPEEFEDSRKLIIDVPEENLRFILAKPMDVTTYVEHGVADVGIAGKDVMLEEERDVYEVLDLNISKCHLAVAGLPNTDWSGVAPRIATKYPNVASSYFREQGEQVEIIKLNGSIELAPLIGLADRIVDIVSTGQTLKENGLVETEHICDITSRFIVNPVSYRMKDDVIDEMASRLSLVVEGETAK</sequence>
<evidence type="ECO:0000250" key="1"/>
<evidence type="ECO:0000305" key="2"/>
<evidence type="ECO:0007829" key="3">
    <source>
        <dbReference type="PDB" id="2VD2"/>
    </source>
</evidence>
<protein>
    <recommendedName>
        <fullName>ATP phosphoribosyltransferase</fullName>
        <shortName>ATP-PRT</shortName>
        <shortName>ATP-PRTase</shortName>
        <ecNumber>2.4.2.17</ecNumber>
    </recommendedName>
</protein>
<reference key="1">
    <citation type="submission" date="1997-08" db="EMBL/GenBank/DDBJ databases">
        <title>Nucleotide sequence of the 300-304 chromosomal segment of Bacillus subtilis.</title>
        <authorList>
            <person name="Lazarevic V."/>
            <person name="Soldo B."/>
            <person name="Rivolta C."/>
            <person name="Reynolds S."/>
            <person name="Mauel C."/>
            <person name="Karamata D."/>
        </authorList>
    </citation>
    <scope>NUCLEOTIDE SEQUENCE [GENOMIC DNA]</scope>
</reference>
<reference key="2">
    <citation type="journal article" date="1997" name="Nature">
        <title>The complete genome sequence of the Gram-positive bacterium Bacillus subtilis.</title>
        <authorList>
            <person name="Kunst F."/>
            <person name="Ogasawara N."/>
            <person name="Moszer I."/>
            <person name="Albertini A.M."/>
            <person name="Alloni G."/>
            <person name="Azevedo V."/>
            <person name="Bertero M.G."/>
            <person name="Bessieres P."/>
            <person name="Bolotin A."/>
            <person name="Borchert S."/>
            <person name="Borriss R."/>
            <person name="Boursier L."/>
            <person name="Brans A."/>
            <person name="Braun M."/>
            <person name="Brignell S.C."/>
            <person name="Bron S."/>
            <person name="Brouillet S."/>
            <person name="Bruschi C.V."/>
            <person name="Caldwell B."/>
            <person name="Capuano V."/>
            <person name="Carter N.M."/>
            <person name="Choi S.-K."/>
            <person name="Codani J.-J."/>
            <person name="Connerton I.F."/>
            <person name="Cummings N.J."/>
            <person name="Daniel R.A."/>
            <person name="Denizot F."/>
            <person name="Devine K.M."/>
            <person name="Duesterhoeft A."/>
            <person name="Ehrlich S.D."/>
            <person name="Emmerson P.T."/>
            <person name="Entian K.-D."/>
            <person name="Errington J."/>
            <person name="Fabret C."/>
            <person name="Ferrari E."/>
            <person name="Foulger D."/>
            <person name="Fritz C."/>
            <person name="Fujita M."/>
            <person name="Fujita Y."/>
            <person name="Fuma S."/>
            <person name="Galizzi A."/>
            <person name="Galleron N."/>
            <person name="Ghim S.-Y."/>
            <person name="Glaser P."/>
            <person name="Goffeau A."/>
            <person name="Golightly E.J."/>
            <person name="Grandi G."/>
            <person name="Guiseppi G."/>
            <person name="Guy B.J."/>
            <person name="Haga K."/>
            <person name="Haiech J."/>
            <person name="Harwood C.R."/>
            <person name="Henaut A."/>
            <person name="Hilbert H."/>
            <person name="Holsappel S."/>
            <person name="Hosono S."/>
            <person name="Hullo M.-F."/>
            <person name="Itaya M."/>
            <person name="Jones L.-M."/>
            <person name="Joris B."/>
            <person name="Karamata D."/>
            <person name="Kasahara Y."/>
            <person name="Klaerr-Blanchard M."/>
            <person name="Klein C."/>
            <person name="Kobayashi Y."/>
            <person name="Koetter P."/>
            <person name="Koningstein G."/>
            <person name="Krogh S."/>
            <person name="Kumano M."/>
            <person name="Kurita K."/>
            <person name="Lapidus A."/>
            <person name="Lardinois S."/>
            <person name="Lauber J."/>
            <person name="Lazarevic V."/>
            <person name="Lee S.-M."/>
            <person name="Levine A."/>
            <person name="Liu H."/>
            <person name="Masuda S."/>
            <person name="Mauel C."/>
            <person name="Medigue C."/>
            <person name="Medina N."/>
            <person name="Mellado R.P."/>
            <person name="Mizuno M."/>
            <person name="Moestl D."/>
            <person name="Nakai S."/>
            <person name="Noback M."/>
            <person name="Noone D."/>
            <person name="O'Reilly M."/>
            <person name="Ogawa K."/>
            <person name="Ogiwara A."/>
            <person name="Oudega B."/>
            <person name="Park S.-H."/>
            <person name="Parro V."/>
            <person name="Pohl T.M."/>
            <person name="Portetelle D."/>
            <person name="Porwollik S."/>
            <person name="Prescott A.M."/>
            <person name="Presecan E."/>
            <person name="Pujic P."/>
            <person name="Purnelle B."/>
            <person name="Rapoport G."/>
            <person name="Rey M."/>
            <person name="Reynolds S."/>
            <person name="Rieger M."/>
            <person name="Rivolta C."/>
            <person name="Rocha E."/>
            <person name="Roche B."/>
            <person name="Rose M."/>
            <person name="Sadaie Y."/>
            <person name="Sato T."/>
            <person name="Scanlan E."/>
            <person name="Schleich S."/>
            <person name="Schroeter R."/>
            <person name="Scoffone F."/>
            <person name="Sekiguchi J."/>
            <person name="Sekowska A."/>
            <person name="Seror S.J."/>
            <person name="Serror P."/>
            <person name="Shin B.-S."/>
            <person name="Soldo B."/>
            <person name="Sorokin A."/>
            <person name="Tacconi E."/>
            <person name="Takagi T."/>
            <person name="Takahashi H."/>
            <person name="Takemaru K."/>
            <person name="Takeuchi M."/>
            <person name="Tamakoshi A."/>
            <person name="Tanaka T."/>
            <person name="Terpstra P."/>
            <person name="Tognoni A."/>
            <person name="Tosato V."/>
            <person name="Uchiyama S."/>
            <person name="Vandenbol M."/>
            <person name="Vannier F."/>
            <person name="Vassarotti A."/>
            <person name="Viari A."/>
            <person name="Wambutt R."/>
            <person name="Wedler E."/>
            <person name="Wedler H."/>
            <person name="Weitzenegger T."/>
            <person name="Winters P."/>
            <person name="Wipat A."/>
            <person name="Yamamoto H."/>
            <person name="Yamane K."/>
            <person name="Yasumoto K."/>
            <person name="Yata K."/>
            <person name="Yoshida K."/>
            <person name="Yoshikawa H.-F."/>
            <person name="Zumstein E."/>
            <person name="Yoshikawa H."/>
            <person name="Danchin A."/>
        </authorList>
    </citation>
    <scope>NUCLEOTIDE SEQUENCE [LARGE SCALE GENOMIC DNA]</scope>
    <source>
        <strain>168</strain>
    </source>
</reference>
<keyword id="KW-0002">3D-structure</keyword>
<keyword id="KW-0028">Amino-acid biosynthesis</keyword>
<keyword id="KW-0067">ATP-binding</keyword>
<keyword id="KW-0963">Cytoplasm</keyword>
<keyword id="KW-0328">Glycosyltransferase</keyword>
<keyword id="KW-0368">Histidine biosynthesis</keyword>
<keyword id="KW-0547">Nucleotide-binding</keyword>
<keyword id="KW-1185">Reference proteome</keyword>
<keyword id="KW-0808">Transferase</keyword>
<organism>
    <name type="scientific">Bacillus subtilis (strain 168)</name>
    <dbReference type="NCBI Taxonomy" id="224308"/>
    <lineage>
        <taxon>Bacteria</taxon>
        <taxon>Bacillati</taxon>
        <taxon>Bacillota</taxon>
        <taxon>Bacilli</taxon>
        <taxon>Bacillales</taxon>
        <taxon>Bacillaceae</taxon>
        <taxon>Bacillus</taxon>
    </lineage>
</organism>
<proteinExistence type="evidence at protein level"/>
<gene>
    <name type="primary">hisG</name>
    <name type="ordered locus">BSU34920</name>
</gene>
<comment type="function">
    <text evidence="1">Catalyzes the condensation of ATP and 5-phosphoribose 1-diphosphate to form N'-(5'-phosphoribosyl)-ATP (PR-ATP). Has a crucial role in the pathway because the rate of histidine biosynthesis seems to be controlled primarily by regulation of HisG enzymatic activity (By similarity).</text>
</comment>
<comment type="catalytic activity">
    <reaction>
        <text>1-(5-phospho-beta-D-ribosyl)-ATP + diphosphate = 5-phospho-alpha-D-ribose 1-diphosphate + ATP</text>
        <dbReference type="Rhea" id="RHEA:18473"/>
        <dbReference type="ChEBI" id="CHEBI:30616"/>
        <dbReference type="ChEBI" id="CHEBI:33019"/>
        <dbReference type="ChEBI" id="CHEBI:58017"/>
        <dbReference type="ChEBI" id="CHEBI:73183"/>
        <dbReference type="EC" id="2.4.2.17"/>
    </reaction>
</comment>
<comment type="pathway">
    <text>Amino-acid biosynthesis; L-histidine biosynthesis; L-histidine from 5-phospho-alpha-D-ribose 1-diphosphate: step 1/9.</text>
</comment>
<comment type="subunit">
    <text evidence="1">Heteromultimer composed of HisG and HisZ subunits.</text>
</comment>
<comment type="subcellular location">
    <subcellularLocation>
        <location evidence="1">Cytoplasm</location>
    </subcellularLocation>
</comment>
<comment type="domain">
    <text>Lacks the C-terminal regulatory region which is replaced by HisZ.</text>
</comment>
<comment type="similarity">
    <text evidence="2">Belongs to the ATP phosphoribosyltransferase family. Short subfamily.</text>
</comment>
<accession>O34520</accession>
<dbReference type="EC" id="2.4.2.17"/>
<dbReference type="EMBL" id="AF017113">
    <property type="protein sequence ID" value="AAC67294.1"/>
    <property type="molecule type" value="Genomic_DNA"/>
</dbReference>
<dbReference type="EMBL" id="AL009126">
    <property type="protein sequence ID" value="CAB15497.1"/>
    <property type="molecule type" value="Genomic_DNA"/>
</dbReference>
<dbReference type="PIR" id="C69641">
    <property type="entry name" value="C69641"/>
</dbReference>
<dbReference type="RefSeq" id="NP_391372.1">
    <property type="nucleotide sequence ID" value="NC_000964.3"/>
</dbReference>
<dbReference type="RefSeq" id="WP_009968235.1">
    <property type="nucleotide sequence ID" value="NZ_OZ025638.1"/>
</dbReference>
<dbReference type="PDB" id="2VD2">
    <property type="method" value="X-ray"/>
    <property type="resolution" value="2.85 A"/>
    <property type="chains" value="A=1-213"/>
</dbReference>
<dbReference type="PDBsum" id="2VD2"/>
<dbReference type="SMR" id="O34520"/>
<dbReference type="FunCoup" id="O34520">
    <property type="interactions" value="548"/>
</dbReference>
<dbReference type="STRING" id="224308.BSU34920"/>
<dbReference type="PaxDb" id="224308-BSU34920"/>
<dbReference type="EnsemblBacteria" id="CAB15497">
    <property type="protein sequence ID" value="CAB15497"/>
    <property type="gene ID" value="BSU_34920"/>
</dbReference>
<dbReference type="GeneID" id="936568"/>
<dbReference type="KEGG" id="bsu:BSU34920"/>
<dbReference type="PATRIC" id="fig|224308.179.peg.3780"/>
<dbReference type="eggNOG" id="COG0040">
    <property type="taxonomic scope" value="Bacteria"/>
</dbReference>
<dbReference type="InParanoid" id="O34520"/>
<dbReference type="OrthoDB" id="9801867at2"/>
<dbReference type="PhylomeDB" id="O34520"/>
<dbReference type="BioCyc" id="BSUB:BSU34920-MONOMER"/>
<dbReference type="UniPathway" id="UPA00031">
    <property type="reaction ID" value="UER00006"/>
</dbReference>
<dbReference type="EvolutionaryTrace" id="O34520"/>
<dbReference type="Proteomes" id="UP000001570">
    <property type="component" value="Chromosome"/>
</dbReference>
<dbReference type="GO" id="GO:0005737">
    <property type="term" value="C:cytoplasm"/>
    <property type="evidence" value="ECO:0007669"/>
    <property type="project" value="UniProtKB-SubCell"/>
</dbReference>
<dbReference type="GO" id="GO:0005524">
    <property type="term" value="F:ATP binding"/>
    <property type="evidence" value="ECO:0007669"/>
    <property type="project" value="UniProtKB-KW"/>
</dbReference>
<dbReference type="GO" id="GO:0003879">
    <property type="term" value="F:ATP phosphoribosyltransferase activity"/>
    <property type="evidence" value="ECO:0000318"/>
    <property type="project" value="GO_Central"/>
</dbReference>
<dbReference type="GO" id="GO:0000105">
    <property type="term" value="P:L-histidine biosynthetic process"/>
    <property type="evidence" value="ECO:0000318"/>
    <property type="project" value="GO_Central"/>
</dbReference>
<dbReference type="CDD" id="cd13595">
    <property type="entry name" value="PBP2_HisGs"/>
    <property type="match status" value="1"/>
</dbReference>
<dbReference type="FunFam" id="3.40.190.10:FF:000008">
    <property type="entry name" value="ATP phosphoribosyltransferase"/>
    <property type="match status" value="1"/>
</dbReference>
<dbReference type="FunFam" id="3.40.190.10:FF:000011">
    <property type="entry name" value="ATP phosphoribosyltransferase"/>
    <property type="match status" value="1"/>
</dbReference>
<dbReference type="Gene3D" id="3.40.190.10">
    <property type="entry name" value="Periplasmic binding protein-like II"/>
    <property type="match status" value="2"/>
</dbReference>
<dbReference type="HAMAP" id="MF_01018">
    <property type="entry name" value="HisG_Short"/>
    <property type="match status" value="1"/>
</dbReference>
<dbReference type="InterPro" id="IPR013820">
    <property type="entry name" value="ATP_PRibTrfase_cat"/>
</dbReference>
<dbReference type="InterPro" id="IPR018198">
    <property type="entry name" value="ATP_PRibTrfase_CS"/>
</dbReference>
<dbReference type="InterPro" id="IPR001348">
    <property type="entry name" value="ATP_PRibTrfase_HisG"/>
</dbReference>
<dbReference type="InterPro" id="IPR024893">
    <property type="entry name" value="ATP_PRibTrfase_HisG_short"/>
</dbReference>
<dbReference type="NCBIfam" id="TIGR00070">
    <property type="entry name" value="hisG"/>
    <property type="match status" value="1"/>
</dbReference>
<dbReference type="PANTHER" id="PTHR21403:SF8">
    <property type="entry name" value="ATP PHOSPHORIBOSYLTRANSFERASE"/>
    <property type="match status" value="1"/>
</dbReference>
<dbReference type="PANTHER" id="PTHR21403">
    <property type="entry name" value="ATP PHOSPHORIBOSYLTRANSFERASE ATP-PRTASE"/>
    <property type="match status" value="1"/>
</dbReference>
<dbReference type="Pfam" id="PF01634">
    <property type="entry name" value="HisG"/>
    <property type="match status" value="1"/>
</dbReference>
<dbReference type="SUPFAM" id="SSF53850">
    <property type="entry name" value="Periplasmic binding protein-like II"/>
    <property type="match status" value="1"/>
</dbReference>
<dbReference type="PROSITE" id="PS01316">
    <property type="entry name" value="ATP_P_PHORIBOSYLTR"/>
    <property type="match status" value="1"/>
</dbReference>
<feature type="chain" id="PRO_0000151898" description="ATP phosphoribosyltransferase">
    <location>
        <begin position="1"/>
        <end position="213"/>
    </location>
</feature>
<feature type="strand" evidence="3">
    <location>
        <begin position="5"/>
        <end position="10"/>
    </location>
</feature>
<feature type="helix" evidence="3">
    <location>
        <begin position="15"/>
        <end position="25"/>
    </location>
</feature>
<feature type="helix" evidence="3">
    <location>
        <begin position="31"/>
        <end position="33"/>
    </location>
</feature>
<feature type="strand" evidence="3">
    <location>
        <begin position="39"/>
        <end position="43"/>
    </location>
</feature>
<feature type="helix" evidence="3">
    <location>
        <begin position="44"/>
        <end position="46"/>
    </location>
</feature>
<feature type="strand" evidence="3">
    <location>
        <begin position="48"/>
        <end position="53"/>
    </location>
</feature>
<feature type="helix" evidence="3">
    <location>
        <begin position="57"/>
        <end position="64"/>
    </location>
</feature>
<feature type="strand" evidence="3">
    <location>
        <begin position="66"/>
        <end position="71"/>
    </location>
</feature>
<feature type="helix" evidence="3">
    <location>
        <begin position="75"/>
        <end position="78"/>
    </location>
</feature>
<feature type="strand" evidence="3">
    <location>
        <begin position="83"/>
        <end position="89"/>
    </location>
</feature>
<feature type="strand" evidence="3">
    <location>
        <begin position="96"/>
        <end position="101"/>
    </location>
</feature>
<feature type="strand" evidence="3">
    <location>
        <begin position="109"/>
        <end position="111"/>
    </location>
</feature>
<feature type="strand" evidence="3">
    <location>
        <begin position="113"/>
        <end position="117"/>
    </location>
</feature>
<feature type="helix" evidence="3">
    <location>
        <begin position="119"/>
        <end position="129"/>
    </location>
</feature>
<feature type="strand" evidence="3">
    <location>
        <begin position="134"/>
        <end position="137"/>
    </location>
</feature>
<feature type="helix" evidence="3">
    <location>
        <begin position="144"/>
        <end position="147"/>
    </location>
</feature>
<feature type="strand" evidence="3">
    <location>
        <begin position="152"/>
        <end position="158"/>
    </location>
</feature>
<feature type="strand" evidence="3">
    <location>
        <begin position="161"/>
        <end position="164"/>
    </location>
</feature>
<feature type="strand" evidence="3">
    <location>
        <begin position="170"/>
        <end position="177"/>
    </location>
</feature>
<feature type="strand" evidence="3">
    <location>
        <begin position="181"/>
        <end position="184"/>
    </location>
</feature>
<feature type="helix" evidence="3">
    <location>
        <begin position="186"/>
        <end position="210"/>
    </location>
</feature>
<name>HIS1_BACSU</name>